<reference key="1">
    <citation type="journal article" date="2008" name="J. Bacteriol.">
        <title>Genome sequence of Staphylococcus aureus strain Newman and comparative analysis of staphylococcal genomes: polymorphism and evolution of two major pathogenicity islands.</title>
        <authorList>
            <person name="Baba T."/>
            <person name="Bae T."/>
            <person name="Schneewind O."/>
            <person name="Takeuchi F."/>
            <person name="Hiramatsu K."/>
        </authorList>
    </citation>
    <scope>NUCLEOTIDE SEQUENCE [LARGE SCALE GENOMIC DNA]</scope>
    <source>
        <strain>Newman</strain>
    </source>
</reference>
<comment type="function">
    <text evidence="1">One of the primary rRNA binding proteins, this protein initially binds near the 5'-end of the 23S rRNA. It is important during the early stages of 50S assembly. It makes multiple contacts with different domains of the 23S rRNA in the assembled 50S subunit and ribosome.</text>
</comment>
<comment type="function">
    <text evidence="1">Forms part of the polypeptide exit tunnel.</text>
</comment>
<comment type="subunit">
    <text evidence="1">Part of the 50S ribosomal subunit.</text>
</comment>
<comment type="similarity">
    <text evidence="1">Belongs to the universal ribosomal protein uL4 family.</text>
</comment>
<organism>
    <name type="scientific">Staphylococcus aureus (strain Newman)</name>
    <dbReference type="NCBI Taxonomy" id="426430"/>
    <lineage>
        <taxon>Bacteria</taxon>
        <taxon>Bacillati</taxon>
        <taxon>Bacillota</taxon>
        <taxon>Bacilli</taxon>
        <taxon>Bacillales</taxon>
        <taxon>Staphylococcaceae</taxon>
        <taxon>Staphylococcus</taxon>
    </lineage>
</organism>
<protein>
    <recommendedName>
        <fullName evidence="1">Large ribosomal subunit protein uL4</fullName>
    </recommendedName>
    <alternativeName>
        <fullName evidence="3">50S ribosomal protein L4</fullName>
    </alternativeName>
</protein>
<name>RL4_STAAE</name>
<evidence type="ECO:0000255" key="1">
    <source>
        <dbReference type="HAMAP-Rule" id="MF_01328"/>
    </source>
</evidence>
<evidence type="ECO:0000256" key="2">
    <source>
        <dbReference type="SAM" id="MobiDB-lite"/>
    </source>
</evidence>
<evidence type="ECO:0000305" key="3"/>
<gene>
    <name evidence="1" type="primary">rplD</name>
    <name type="ordered locus">NWMN_2151</name>
</gene>
<keyword id="KW-0687">Ribonucleoprotein</keyword>
<keyword id="KW-0689">Ribosomal protein</keyword>
<keyword id="KW-0694">RNA-binding</keyword>
<keyword id="KW-0699">rRNA-binding</keyword>
<dbReference type="EMBL" id="AP009351">
    <property type="protein sequence ID" value="BAF68423.1"/>
    <property type="molecule type" value="Genomic_DNA"/>
</dbReference>
<dbReference type="RefSeq" id="WP_000024827.1">
    <property type="nucleotide sequence ID" value="NZ_JBBIAE010000006.1"/>
</dbReference>
<dbReference type="SMR" id="A6QJ91"/>
<dbReference type="KEGG" id="sae:NWMN_2151"/>
<dbReference type="HOGENOM" id="CLU_041575_5_2_9"/>
<dbReference type="Proteomes" id="UP000006386">
    <property type="component" value="Chromosome"/>
</dbReference>
<dbReference type="GO" id="GO:1990904">
    <property type="term" value="C:ribonucleoprotein complex"/>
    <property type="evidence" value="ECO:0007669"/>
    <property type="project" value="UniProtKB-KW"/>
</dbReference>
<dbReference type="GO" id="GO:0005840">
    <property type="term" value="C:ribosome"/>
    <property type="evidence" value="ECO:0007669"/>
    <property type="project" value="UniProtKB-KW"/>
</dbReference>
<dbReference type="GO" id="GO:0019843">
    <property type="term" value="F:rRNA binding"/>
    <property type="evidence" value="ECO:0007669"/>
    <property type="project" value="UniProtKB-UniRule"/>
</dbReference>
<dbReference type="GO" id="GO:0003735">
    <property type="term" value="F:structural constituent of ribosome"/>
    <property type="evidence" value="ECO:0007669"/>
    <property type="project" value="InterPro"/>
</dbReference>
<dbReference type="GO" id="GO:0006412">
    <property type="term" value="P:translation"/>
    <property type="evidence" value="ECO:0007669"/>
    <property type="project" value="UniProtKB-UniRule"/>
</dbReference>
<dbReference type="FunFam" id="3.40.1370.10:FF:000003">
    <property type="entry name" value="50S ribosomal protein L4"/>
    <property type="match status" value="1"/>
</dbReference>
<dbReference type="Gene3D" id="3.40.1370.10">
    <property type="match status" value="1"/>
</dbReference>
<dbReference type="HAMAP" id="MF_01328_B">
    <property type="entry name" value="Ribosomal_uL4_B"/>
    <property type="match status" value="1"/>
</dbReference>
<dbReference type="InterPro" id="IPR002136">
    <property type="entry name" value="Ribosomal_uL4"/>
</dbReference>
<dbReference type="InterPro" id="IPR013005">
    <property type="entry name" value="Ribosomal_uL4-like"/>
</dbReference>
<dbReference type="InterPro" id="IPR023574">
    <property type="entry name" value="Ribosomal_uL4_dom_sf"/>
</dbReference>
<dbReference type="NCBIfam" id="TIGR03953">
    <property type="entry name" value="rplD_bact"/>
    <property type="match status" value="1"/>
</dbReference>
<dbReference type="PANTHER" id="PTHR10746">
    <property type="entry name" value="50S RIBOSOMAL PROTEIN L4"/>
    <property type="match status" value="1"/>
</dbReference>
<dbReference type="PANTHER" id="PTHR10746:SF6">
    <property type="entry name" value="LARGE RIBOSOMAL SUBUNIT PROTEIN UL4M"/>
    <property type="match status" value="1"/>
</dbReference>
<dbReference type="Pfam" id="PF00573">
    <property type="entry name" value="Ribosomal_L4"/>
    <property type="match status" value="1"/>
</dbReference>
<dbReference type="SUPFAM" id="SSF52166">
    <property type="entry name" value="Ribosomal protein L4"/>
    <property type="match status" value="1"/>
</dbReference>
<accession>A6QJ91</accession>
<sequence>MANYDVLKLDGTKSGSIELSDAVFGIEPNNSVLFEAINLQRASLRQGTHAVKNRSAVSGGGRKPWKQKGTGRARQGTIRAPQWRGGGIVFGPTPRSYAYKMPKKMRRLALRSALSFKAQENGLTVVDAFNFEAPKTKEFKNVLSTLEQPKKVLVVTENEDVNVELSARNIPGVQVTTAQGLNVLDITNADSLVITEAAAKKVEEVLG</sequence>
<proteinExistence type="inferred from homology"/>
<feature type="chain" id="PRO_1000073273" description="Large ribosomal subunit protein uL4">
    <location>
        <begin position="1"/>
        <end position="207"/>
    </location>
</feature>
<feature type="region of interest" description="Disordered" evidence="2">
    <location>
        <begin position="50"/>
        <end position="76"/>
    </location>
</feature>